<accession>Q9CL73</accession>
<protein>
    <recommendedName>
        <fullName evidence="1">Xanthine-guanine phosphoribosyltransferase</fullName>
        <shortName evidence="1">XGPRT</shortName>
        <ecNumber evidence="1">2.4.2.-</ecNumber>
        <ecNumber evidence="1">2.4.2.22</ecNumber>
    </recommendedName>
    <alternativeName>
        <fullName evidence="1">Xanthine phosphoribosyltransferase</fullName>
    </alternativeName>
</protein>
<proteinExistence type="inferred from homology"/>
<name>XGPT_PASMU</name>
<evidence type="ECO:0000255" key="1">
    <source>
        <dbReference type="HAMAP-Rule" id="MF_01903"/>
    </source>
</evidence>
<gene>
    <name evidence="1" type="primary">gpt</name>
    <name type="ordered locus">PM1369</name>
</gene>
<dbReference type="EC" id="2.4.2.-" evidence="1"/>
<dbReference type="EC" id="2.4.2.22" evidence="1"/>
<dbReference type="EMBL" id="AE004439">
    <property type="protein sequence ID" value="AAK03453.1"/>
    <property type="molecule type" value="Genomic_DNA"/>
</dbReference>
<dbReference type="RefSeq" id="WP_005717877.1">
    <property type="nucleotide sequence ID" value="NC_002663.1"/>
</dbReference>
<dbReference type="SMR" id="Q9CL73"/>
<dbReference type="STRING" id="272843.PM1369"/>
<dbReference type="EnsemblBacteria" id="AAK03453">
    <property type="protein sequence ID" value="AAK03453"/>
    <property type="gene ID" value="PM1369"/>
</dbReference>
<dbReference type="GeneID" id="77207080"/>
<dbReference type="KEGG" id="pmu:PM1369"/>
<dbReference type="PATRIC" id="fig|272843.6.peg.1381"/>
<dbReference type="HOGENOM" id="CLU_080904_3_0_6"/>
<dbReference type="OrthoDB" id="9789690at2"/>
<dbReference type="UniPathway" id="UPA00602">
    <property type="reaction ID" value="UER00658"/>
</dbReference>
<dbReference type="UniPathway" id="UPA00909">
    <property type="reaction ID" value="UER00887"/>
</dbReference>
<dbReference type="Proteomes" id="UP000000809">
    <property type="component" value="Chromosome"/>
</dbReference>
<dbReference type="GO" id="GO:0005829">
    <property type="term" value="C:cytosol"/>
    <property type="evidence" value="ECO:0007669"/>
    <property type="project" value="TreeGrafter"/>
</dbReference>
<dbReference type="GO" id="GO:0005886">
    <property type="term" value="C:plasma membrane"/>
    <property type="evidence" value="ECO:0007669"/>
    <property type="project" value="UniProtKB-SubCell"/>
</dbReference>
<dbReference type="GO" id="GO:0052657">
    <property type="term" value="F:guanine phosphoribosyltransferase activity"/>
    <property type="evidence" value="ECO:0007669"/>
    <property type="project" value="RHEA"/>
</dbReference>
<dbReference type="GO" id="GO:0004422">
    <property type="term" value="F:hypoxanthine phosphoribosyltransferase activity"/>
    <property type="evidence" value="ECO:0007669"/>
    <property type="project" value="RHEA"/>
</dbReference>
<dbReference type="GO" id="GO:0000287">
    <property type="term" value="F:magnesium ion binding"/>
    <property type="evidence" value="ECO:0007669"/>
    <property type="project" value="UniProtKB-UniRule"/>
</dbReference>
<dbReference type="GO" id="GO:0000310">
    <property type="term" value="F:xanthine phosphoribosyltransferase activity"/>
    <property type="evidence" value="ECO:0007669"/>
    <property type="project" value="UniProtKB-UniRule"/>
</dbReference>
<dbReference type="GO" id="GO:0032263">
    <property type="term" value="P:GMP salvage"/>
    <property type="evidence" value="ECO:0007669"/>
    <property type="project" value="UniProtKB-UniRule"/>
</dbReference>
<dbReference type="GO" id="GO:0032264">
    <property type="term" value="P:IMP salvage"/>
    <property type="evidence" value="ECO:0007669"/>
    <property type="project" value="TreeGrafter"/>
</dbReference>
<dbReference type="GO" id="GO:0006166">
    <property type="term" value="P:purine ribonucleoside salvage"/>
    <property type="evidence" value="ECO:0007669"/>
    <property type="project" value="UniProtKB-KW"/>
</dbReference>
<dbReference type="GO" id="GO:0032265">
    <property type="term" value="P:XMP salvage"/>
    <property type="evidence" value="ECO:0007669"/>
    <property type="project" value="UniProtKB-UniRule"/>
</dbReference>
<dbReference type="CDD" id="cd06223">
    <property type="entry name" value="PRTases_typeI"/>
    <property type="match status" value="1"/>
</dbReference>
<dbReference type="FunFam" id="3.40.50.2020:FF:000009">
    <property type="entry name" value="Xanthine phosphoribosyltransferase"/>
    <property type="match status" value="1"/>
</dbReference>
<dbReference type="Gene3D" id="3.40.50.2020">
    <property type="match status" value="1"/>
</dbReference>
<dbReference type="HAMAP" id="MF_01903">
    <property type="entry name" value="XGPRT"/>
    <property type="match status" value="1"/>
</dbReference>
<dbReference type="InterPro" id="IPR000836">
    <property type="entry name" value="PRibTrfase_dom"/>
</dbReference>
<dbReference type="InterPro" id="IPR029057">
    <property type="entry name" value="PRTase-like"/>
</dbReference>
<dbReference type="InterPro" id="IPR023747">
    <property type="entry name" value="Xanthine_Guanine_PRibTrfase"/>
</dbReference>
<dbReference type="NCBIfam" id="NF006613">
    <property type="entry name" value="PRK09177.1"/>
    <property type="match status" value="1"/>
</dbReference>
<dbReference type="PANTHER" id="PTHR39563">
    <property type="entry name" value="XANTHINE PHOSPHORIBOSYLTRANSFERASE"/>
    <property type="match status" value="1"/>
</dbReference>
<dbReference type="PANTHER" id="PTHR39563:SF1">
    <property type="entry name" value="XANTHINE-GUANINE PHOSPHORIBOSYLTRANSFERASE"/>
    <property type="match status" value="1"/>
</dbReference>
<dbReference type="Pfam" id="PF00156">
    <property type="entry name" value="Pribosyltran"/>
    <property type="match status" value="1"/>
</dbReference>
<dbReference type="SUPFAM" id="SSF53271">
    <property type="entry name" value="PRTase-like"/>
    <property type="match status" value="1"/>
</dbReference>
<dbReference type="PROSITE" id="PS00103">
    <property type="entry name" value="PUR_PYR_PR_TRANSFER"/>
    <property type="match status" value="1"/>
</dbReference>
<keyword id="KW-0997">Cell inner membrane</keyword>
<keyword id="KW-1003">Cell membrane</keyword>
<keyword id="KW-0328">Glycosyltransferase</keyword>
<keyword id="KW-0460">Magnesium</keyword>
<keyword id="KW-0472">Membrane</keyword>
<keyword id="KW-0479">Metal-binding</keyword>
<keyword id="KW-0660">Purine salvage</keyword>
<keyword id="KW-1185">Reference proteome</keyword>
<keyword id="KW-0808">Transferase</keyword>
<comment type="function">
    <text evidence="1">Purine salvage pathway enzyme that catalyzes the transfer of the ribosyl-5-phosphate group from 5-phospho-alpha-D-ribose 1-diphosphate (PRPP) to the N9 position of the 6-oxopurines guanine and xanthine to form the corresponding ribonucleotides GMP (guanosine 5'-monophosphate) and XMP (xanthosine 5'-monophosphate), with the release of PPi. To a lesser extent, also acts on hypoxanthine.</text>
</comment>
<comment type="catalytic activity">
    <reaction evidence="1">
        <text>GMP + diphosphate = guanine + 5-phospho-alpha-D-ribose 1-diphosphate</text>
        <dbReference type="Rhea" id="RHEA:25424"/>
        <dbReference type="ChEBI" id="CHEBI:16235"/>
        <dbReference type="ChEBI" id="CHEBI:33019"/>
        <dbReference type="ChEBI" id="CHEBI:58017"/>
        <dbReference type="ChEBI" id="CHEBI:58115"/>
    </reaction>
    <physiologicalReaction direction="right-to-left" evidence="1">
        <dbReference type="Rhea" id="RHEA:25426"/>
    </physiologicalReaction>
</comment>
<comment type="catalytic activity">
    <reaction evidence="1">
        <text>XMP + diphosphate = xanthine + 5-phospho-alpha-D-ribose 1-diphosphate</text>
        <dbReference type="Rhea" id="RHEA:10800"/>
        <dbReference type="ChEBI" id="CHEBI:17712"/>
        <dbReference type="ChEBI" id="CHEBI:33019"/>
        <dbReference type="ChEBI" id="CHEBI:57464"/>
        <dbReference type="ChEBI" id="CHEBI:58017"/>
        <dbReference type="EC" id="2.4.2.22"/>
    </reaction>
    <physiologicalReaction direction="right-to-left" evidence="1">
        <dbReference type="Rhea" id="RHEA:10802"/>
    </physiologicalReaction>
</comment>
<comment type="catalytic activity">
    <reaction evidence="1">
        <text>IMP + diphosphate = hypoxanthine + 5-phospho-alpha-D-ribose 1-diphosphate</text>
        <dbReference type="Rhea" id="RHEA:17973"/>
        <dbReference type="ChEBI" id="CHEBI:17368"/>
        <dbReference type="ChEBI" id="CHEBI:33019"/>
        <dbReference type="ChEBI" id="CHEBI:58017"/>
        <dbReference type="ChEBI" id="CHEBI:58053"/>
    </reaction>
    <physiologicalReaction direction="right-to-left" evidence="1">
        <dbReference type="Rhea" id="RHEA:17975"/>
    </physiologicalReaction>
</comment>
<comment type="cofactor">
    <cofactor evidence="1">
        <name>Mg(2+)</name>
        <dbReference type="ChEBI" id="CHEBI:18420"/>
    </cofactor>
</comment>
<comment type="pathway">
    <text evidence="1">Purine metabolism; GMP biosynthesis via salvage pathway; GMP from guanine: step 1/1.</text>
</comment>
<comment type="pathway">
    <text evidence="1">Purine metabolism; XMP biosynthesis via salvage pathway; XMP from xanthine: step 1/1.</text>
</comment>
<comment type="subunit">
    <text evidence="1">Homotetramer.</text>
</comment>
<comment type="subcellular location">
    <subcellularLocation>
        <location evidence="1">Cell inner membrane</location>
        <topology evidence="1">Peripheral membrane protein</topology>
    </subcellularLocation>
</comment>
<comment type="similarity">
    <text evidence="1">Belongs to the purine/pyrimidine phosphoribosyltransferase family. XGPT subfamily.</text>
</comment>
<sequence length="153" mass="17115">MSEKYVVTWDMFQMHARKLSERLLPASQWKGIIAVSRGGLFPAAVLARELGIRHIETVCIASYHDHVEQGELKVLHRAEGDGEGFIVVDDLVDTGNTARAIRDMYPKAKFVTVFAKPAGAALVDDYVIDIPQNTWIEQPWDLGLTFVPPLARK</sequence>
<reference key="1">
    <citation type="journal article" date="2001" name="Proc. Natl. Acad. Sci. U.S.A.">
        <title>Complete genomic sequence of Pasteurella multocida Pm70.</title>
        <authorList>
            <person name="May B.J."/>
            <person name="Zhang Q."/>
            <person name="Li L.L."/>
            <person name="Paustian M.L."/>
            <person name="Whittam T.S."/>
            <person name="Kapur V."/>
        </authorList>
    </citation>
    <scope>NUCLEOTIDE SEQUENCE [LARGE SCALE GENOMIC DNA]</scope>
    <source>
        <strain>Pm70</strain>
    </source>
</reference>
<organism>
    <name type="scientific">Pasteurella multocida (strain Pm70)</name>
    <dbReference type="NCBI Taxonomy" id="272843"/>
    <lineage>
        <taxon>Bacteria</taxon>
        <taxon>Pseudomonadati</taxon>
        <taxon>Pseudomonadota</taxon>
        <taxon>Gammaproteobacteria</taxon>
        <taxon>Pasteurellales</taxon>
        <taxon>Pasteurellaceae</taxon>
        <taxon>Pasteurella</taxon>
    </lineage>
</organism>
<feature type="chain" id="PRO_0000139677" description="Xanthine-guanine phosphoribosyltransferase">
    <location>
        <begin position="1"/>
        <end position="153"/>
    </location>
</feature>
<feature type="binding site" evidence="1">
    <location>
        <begin position="37"/>
        <end position="38"/>
    </location>
    <ligand>
        <name>5-phospho-alpha-D-ribose 1-diphosphate</name>
        <dbReference type="ChEBI" id="CHEBI:58017"/>
    </ligand>
</feature>
<feature type="binding site" evidence="1">
    <location>
        <begin position="89"/>
        <end position="97"/>
    </location>
    <ligand>
        <name>5-phospho-alpha-D-ribose 1-diphosphate</name>
        <dbReference type="ChEBI" id="CHEBI:58017"/>
    </ligand>
</feature>
<feature type="binding site" evidence="1">
    <location>
        <position position="90"/>
    </location>
    <ligand>
        <name>Mg(2+)</name>
        <dbReference type="ChEBI" id="CHEBI:18420"/>
    </ligand>
</feature>
<feature type="binding site" evidence="1">
    <location>
        <begin position="93"/>
        <end position="97"/>
    </location>
    <ligand>
        <name>GMP</name>
        <dbReference type="ChEBI" id="CHEBI:58115"/>
    </ligand>
</feature>
<feature type="binding site" evidence="1">
    <location>
        <position position="93"/>
    </location>
    <ligand>
        <name>guanine</name>
        <dbReference type="ChEBI" id="CHEBI:16235"/>
    </ligand>
</feature>
<feature type="binding site" evidence="1">
    <location>
        <position position="93"/>
    </location>
    <ligand>
        <name>xanthine</name>
        <dbReference type="ChEBI" id="CHEBI:17712"/>
    </ligand>
</feature>
<feature type="binding site" evidence="1">
    <location>
        <begin position="135"/>
        <end position="136"/>
    </location>
    <ligand>
        <name>GMP</name>
        <dbReference type="ChEBI" id="CHEBI:58115"/>
    </ligand>
</feature>
<feature type="binding site" evidence="1">
    <location>
        <position position="136"/>
    </location>
    <ligand>
        <name>guanine</name>
        <dbReference type="ChEBI" id="CHEBI:16235"/>
    </ligand>
</feature>
<feature type="binding site" evidence="1">
    <location>
        <position position="136"/>
    </location>
    <ligand>
        <name>xanthine</name>
        <dbReference type="ChEBI" id="CHEBI:17712"/>
    </ligand>
</feature>